<accession>Q3ZCH0</accession>
<accession>A5D9A6</accession>
<protein>
    <recommendedName>
        <fullName evidence="5">Stress-70 protein, mitochondrial</fullName>
        <ecNumber evidence="5">3.6.4.10</ecNumber>
    </recommendedName>
    <alternativeName>
        <fullName>75 kDa glucose-regulated protein</fullName>
        <shortName>GRP-75</shortName>
    </alternativeName>
    <alternativeName>
        <fullName>Heat shock 70 kDa protein 9</fullName>
    </alternativeName>
</protein>
<keyword id="KW-0007">Acetylation</keyword>
<keyword id="KW-0067">ATP-binding</keyword>
<keyword id="KW-0143">Chaperone</keyword>
<keyword id="KW-0963">Cytoplasm</keyword>
<keyword id="KW-0378">Hydrolase</keyword>
<keyword id="KW-0488">Methylation</keyword>
<keyword id="KW-0496">Mitochondrion</keyword>
<keyword id="KW-0547">Nucleotide-binding</keyword>
<keyword id="KW-0539">Nucleus</keyword>
<keyword id="KW-0597">Phosphoprotein</keyword>
<keyword id="KW-1185">Reference proteome</keyword>
<keyword id="KW-0809">Transit peptide</keyword>
<evidence type="ECO:0000250" key="1"/>
<evidence type="ECO:0000250" key="2">
    <source>
        <dbReference type="UniProtKB" id="P0CS90"/>
    </source>
</evidence>
<evidence type="ECO:0000250" key="3">
    <source>
        <dbReference type="UniProtKB" id="P0DMV8"/>
    </source>
</evidence>
<evidence type="ECO:0000250" key="4">
    <source>
        <dbReference type="UniProtKB" id="P11021"/>
    </source>
</evidence>
<evidence type="ECO:0000250" key="5">
    <source>
        <dbReference type="UniProtKB" id="P38646"/>
    </source>
</evidence>
<evidence type="ECO:0000250" key="6">
    <source>
        <dbReference type="UniProtKB" id="P38647"/>
    </source>
</evidence>
<evidence type="ECO:0000250" key="7">
    <source>
        <dbReference type="UniProtKB" id="P48721"/>
    </source>
</evidence>
<evidence type="ECO:0000256" key="8">
    <source>
        <dbReference type="SAM" id="MobiDB-lite"/>
    </source>
</evidence>
<evidence type="ECO:0000305" key="9"/>
<organism>
    <name type="scientific">Bos taurus</name>
    <name type="common">Bovine</name>
    <dbReference type="NCBI Taxonomy" id="9913"/>
    <lineage>
        <taxon>Eukaryota</taxon>
        <taxon>Metazoa</taxon>
        <taxon>Chordata</taxon>
        <taxon>Craniata</taxon>
        <taxon>Vertebrata</taxon>
        <taxon>Euteleostomi</taxon>
        <taxon>Mammalia</taxon>
        <taxon>Eutheria</taxon>
        <taxon>Laurasiatheria</taxon>
        <taxon>Artiodactyla</taxon>
        <taxon>Ruminantia</taxon>
        <taxon>Pecora</taxon>
        <taxon>Bovidae</taxon>
        <taxon>Bovinae</taxon>
        <taxon>Bos</taxon>
    </lineage>
</organism>
<dbReference type="EC" id="3.6.4.10" evidence="5"/>
<dbReference type="EMBL" id="BT030525">
    <property type="protein sequence ID" value="ABQ12965.1"/>
    <property type="molecule type" value="mRNA"/>
</dbReference>
<dbReference type="EMBL" id="BC102334">
    <property type="protein sequence ID" value="AAI02335.1"/>
    <property type="molecule type" value="mRNA"/>
</dbReference>
<dbReference type="RefSeq" id="NP_001029696.1">
    <property type="nucleotide sequence ID" value="NM_001034524.2"/>
</dbReference>
<dbReference type="SMR" id="Q3ZCH0"/>
<dbReference type="FunCoup" id="Q3ZCH0">
    <property type="interactions" value="2649"/>
</dbReference>
<dbReference type="IntAct" id="Q3ZCH0">
    <property type="interactions" value="1"/>
</dbReference>
<dbReference type="STRING" id="9913.ENSBTAP00000015172"/>
<dbReference type="PaxDb" id="9913-ENSBTAP00000015172"/>
<dbReference type="PeptideAtlas" id="Q3ZCH0"/>
<dbReference type="Ensembl" id="ENSBTAT00000015172.6">
    <property type="protein sequence ID" value="ENSBTAP00000015172.4"/>
    <property type="gene ID" value="ENSBTAG00000011419.6"/>
</dbReference>
<dbReference type="GeneID" id="517535"/>
<dbReference type="KEGG" id="bta:517535"/>
<dbReference type="CTD" id="3313"/>
<dbReference type="VEuPathDB" id="HostDB:ENSBTAG00000011419"/>
<dbReference type="VGNC" id="VGNC:52243">
    <property type="gene designation" value="HSPA9"/>
</dbReference>
<dbReference type="eggNOG" id="KOG0102">
    <property type="taxonomic scope" value="Eukaryota"/>
</dbReference>
<dbReference type="GeneTree" id="ENSGT00920000149123"/>
<dbReference type="HOGENOM" id="CLU_005965_2_4_1"/>
<dbReference type="InParanoid" id="Q3ZCH0"/>
<dbReference type="OMA" id="MGTDWKI"/>
<dbReference type="OrthoDB" id="2401965at2759"/>
<dbReference type="TreeFam" id="TF105046"/>
<dbReference type="Reactome" id="R-BTA-3371453">
    <property type="pathway name" value="Regulation of HSF1-mediated heat shock response"/>
</dbReference>
<dbReference type="Reactome" id="R-BTA-6799198">
    <property type="pathway name" value="Complex I biogenesis"/>
</dbReference>
<dbReference type="Reactome" id="R-BTA-9837999">
    <property type="pathway name" value="Mitochondrial protein degradation"/>
</dbReference>
<dbReference type="Reactome" id="R-BTA-9865881">
    <property type="pathway name" value="Complex III assembly"/>
</dbReference>
<dbReference type="PRO" id="PR:Q3ZCH0"/>
<dbReference type="Proteomes" id="UP000009136">
    <property type="component" value="Chromosome 7"/>
</dbReference>
<dbReference type="Bgee" id="ENSBTAG00000011419">
    <property type="expression patterns" value="Expressed in adult mammalian kidney and 106 other cell types or tissues"/>
</dbReference>
<dbReference type="GO" id="GO:0005737">
    <property type="term" value="C:cytoplasm"/>
    <property type="evidence" value="ECO:0000250"/>
    <property type="project" value="UniProtKB"/>
</dbReference>
<dbReference type="GO" id="GO:0005759">
    <property type="term" value="C:mitochondrial matrix"/>
    <property type="evidence" value="ECO:0000250"/>
    <property type="project" value="UniProtKB"/>
</dbReference>
<dbReference type="GO" id="GO:0042645">
    <property type="term" value="C:mitochondrial nucleoid"/>
    <property type="evidence" value="ECO:0007669"/>
    <property type="project" value="Ensembl"/>
</dbReference>
<dbReference type="GO" id="GO:0005739">
    <property type="term" value="C:mitochondrion"/>
    <property type="evidence" value="ECO:0000250"/>
    <property type="project" value="UniProtKB"/>
</dbReference>
<dbReference type="GO" id="GO:0005730">
    <property type="term" value="C:nucleolus"/>
    <property type="evidence" value="ECO:0007669"/>
    <property type="project" value="UniProtKB-SubCell"/>
</dbReference>
<dbReference type="GO" id="GO:0005524">
    <property type="term" value="F:ATP binding"/>
    <property type="evidence" value="ECO:0007669"/>
    <property type="project" value="UniProtKB-KW"/>
</dbReference>
<dbReference type="GO" id="GO:0016887">
    <property type="term" value="F:ATP hydrolysis activity"/>
    <property type="evidence" value="ECO:0000250"/>
    <property type="project" value="UniProtKB"/>
</dbReference>
<dbReference type="GO" id="GO:0140662">
    <property type="term" value="F:ATP-dependent protein folding chaperone"/>
    <property type="evidence" value="ECO:0007669"/>
    <property type="project" value="InterPro"/>
</dbReference>
<dbReference type="GO" id="GO:0031072">
    <property type="term" value="F:heat shock protein binding"/>
    <property type="evidence" value="ECO:0000318"/>
    <property type="project" value="GO_Central"/>
</dbReference>
<dbReference type="GO" id="GO:0044183">
    <property type="term" value="F:protein folding chaperone"/>
    <property type="evidence" value="ECO:0000318"/>
    <property type="project" value="GO_Central"/>
</dbReference>
<dbReference type="GO" id="GO:0031625">
    <property type="term" value="F:ubiquitin protein ligase binding"/>
    <property type="evidence" value="ECO:0007669"/>
    <property type="project" value="Ensembl"/>
</dbReference>
<dbReference type="GO" id="GO:0051082">
    <property type="term" value="F:unfolded protein binding"/>
    <property type="evidence" value="ECO:0007669"/>
    <property type="project" value="InterPro"/>
</dbReference>
<dbReference type="GO" id="GO:0036444">
    <property type="term" value="P:calcium import into the mitochondrion"/>
    <property type="evidence" value="ECO:0000250"/>
    <property type="project" value="UniProtKB"/>
</dbReference>
<dbReference type="GO" id="GO:0051085">
    <property type="term" value="P:chaperone cofactor-dependent protein refolding"/>
    <property type="evidence" value="ECO:0000318"/>
    <property type="project" value="GO_Central"/>
</dbReference>
<dbReference type="GO" id="GO:0030218">
    <property type="term" value="P:erythrocyte differentiation"/>
    <property type="evidence" value="ECO:0000250"/>
    <property type="project" value="UniProtKB"/>
</dbReference>
<dbReference type="GO" id="GO:0016226">
    <property type="term" value="P:iron-sulfur cluster assembly"/>
    <property type="evidence" value="ECO:0000250"/>
    <property type="project" value="UniProtKB"/>
</dbReference>
<dbReference type="GO" id="GO:0045647">
    <property type="term" value="P:negative regulation of erythrocyte differentiation"/>
    <property type="evidence" value="ECO:0000250"/>
    <property type="project" value="UniProtKB"/>
</dbReference>
<dbReference type="GO" id="GO:1902037">
    <property type="term" value="P:negative regulation of hematopoietic stem cell differentiation"/>
    <property type="evidence" value="ECO:0000250"/>
    <property type="project" value="UniProtKB"/>
</dbReference>
<dbReference type="GO" id="GO:1903707">
    <property type="term" value="P:negative regulation of hemopoiesis"/>
    <property type="evidence" value="ECO:0000250"/>
    <property type="project" value="UniProtKB"/>
</dbReference>
<dbReference type="GO" id="GO:0043065">
    <property type="term" value="P:positive regulation of apoptotic process"/>
    <property type="evidence" value="ECO:0007669"/>
    <property type="project" value="Ensembl"/>
</dbReference>
<dbReference type="GO" id="GO:0006611">
    <property type="term" value="P:protein export from nucleus"/>
    <property type="evidence" value="ECO:0007669"/>
    <property type="project" value="Ensembl"/>
</dbReference>
<dbReference type="GO" id="GO:0042026">
    <property type="term" value="P:protein refolding"/>
    <property type="evidence" value="ECO:0000318"/>
    <property type="project" value="GO_Central"/>
</dbReference>
<dbReference type="GO" id="GO:0045646">
    <property type="term" value="P:regulation of erythrocyte differentiation"/>
    <property type="evidence" value="ECO:0000250"/>
    <property type="project" value="UniProtKB"/>
</dbReference>
<dbReference type="CDD" id="cd11733">
    <property type="entry name" value="ASKHA_NBD_HSP70_HSPA9"/>
    <property type="match status" value="1"/>
</dbReference>
<dbReference type="FunFam" id="2.60.34.10:FF:000014">
    <property type="entry name" value="Chaperone protein DnaK HSP70"/>
    <property type="match status" value="1"/>
</dbReference>
<dbReference type="FunFam" id="3.30.420.40:FF:000020">
    <property type="entry name" value="Chaperone protein HscA homolog"/>
    <property type="match status" value="1"/>
</dbReference>
<dbReference type="FunFam" id="3.30.30.30:FF:000003">
    <property type="entry name" value="Heat shock protein 9"/>
    <property type="match status" value="1"/>
</dbReference>
<dbReference type="FunFam" id="3.30.420.40:FF:000004">
    <property type="entry name" value="Molecular chaperone DnaK"/>
    <property type="match status" value="1"/>
</dbReference>
<dbReference type="FunFam" id="3.90.640.10:FF:000003">
    <property type="entry name" value="Molecular chaperone DnaK"/>
    <property type="match status" value="1"/>
</dbReference>
<dbReference type="FunFam" id="1.20.1270.10:FF:000011">
    <property type="entry name" value="stress-70 protein, mitochondrial isoform X1"/>
    <property type="match status" value="1"/>
</dbReference>
<dbReference type="Gene3D" id="1.20.1270.10">
    <property type="match status" value="1"/>
</dbReference>
<dbReference type="Gene3D" id="3.30.30.30">
    <property type="match status" value="1"/>
</dbReference>
<dbReference type="Gene3D" id="3.30.420.40">
    <property type="match status" value="2"/>
</dbReference>
<dbReference type="Gene3D" id="3.90.640.10">
    <property type="entry name" value="Actin, Chain A, domain 4"/>
    <property type="match status" value="1"/>
</dbReference>
<dbReference type="Gene3D" id="2.60.34.10">
    <property type="entry name" value="Substrate Binding Domain Of DNAk, Chain A, domain 1"/>
    <property type="match status" value="1"/>
</dbReference>
<dbReference type="HAMAP" id="MF_00332">
    <property type="entry name" value="DnaK"/>
    <property type="match status" value="1"/>
</dbReference>
<dbReference type="InterPro" id="IPR043129">
    <property type="entry name" value="ATPase_NBD"/>
</dbReference>
<dbReference type="InterPro" id="IPR012725">
    <property type="entry name" value="Chaperone_DnaK"/>
</dbReference>
<dbReference type="InterPro" id="IPR018181">
    <property type="entry name" value="Heat_shock_70_CS"/>
</dbReference>
<dbReference type="InterPro" id="IPR029048">
    <property type="entry name" value="HSP70_C_sf"/>
</dbReference>
<dbReference type="InterPro" id="IPR029047">
    <property type="entry name" value="HSP70_peptide-bd_sf"/>
</dbReference>
<dbReference type="InterPro" id="IPR013126">
    <property type="entry name" value="Hsp_70_fam"/>
</dbReference>
<dbReference type="NCBIfam" id="NF001413">
    <property type="entry name" value="PRK00290.1"/>
    <property type="match status" value="1"/>
</dbReference>
<dbReference type="NCBIfam" id="NF003520">
    <property type="entry name" value="PRK05183.1"/>
    <property type="match status" value="1"/>
</dbReference>
<dbReference type="NCBIfam" id="TIGR02350">
    <property type="entry name" value="prok_dnaK"/>
    <property type="match status" value="1"/>
</dbReference>
<dbReference type="PANTHER" id="PTHR19375">
    <property type="entry name" value="HEAT SHOCK PROTEIN 70KDA"/>
    <property type="match status" value="1"/>
</dbReference>
<dbReference type="Pfam" id="PF00012">
    <property type="entry name" value="HSP70"/>
    <property type="match status" value="1"/>
</dbReference>
<dbReference type="PRINTS" id="PR00301">
    <property type="entry name" value="HEATSHOCK70"/>
</dbReference>
<dbReference type="SUPFAM" id="SSF53067">
    <property type="entry name" value="Actin-like ATPase domain"/>
    <property type="match status" value="2"/>
</dbReference>
<dbReference type="SUPFAM" id="SSF100920">
    <property type="entry name" value="Heat shock protein 70kD (HSP70), peptide-binding domain"/>
    <property type="match status" value="1"/>
</dbReference>
<dbReference type="PROSITE" id="PS00297">
    <property type="entry name" value="HSP70_1"/>
    <property type="match status" value="1"/>
</dbReference>
<dbReference type="PROSITE" id="PS00329">
    <property type="entry name" value="HSP70_2"/>
    <property type="match status" value="1"/>
</dbReference>
<dbReference type="PROSITE" id="PS01036">
    <property type="entry name" value="HSP70_3"/>
    <property type="match status" value="1"/>
</dbReference>
<gene>
    <name evidence="5" type="primary">HSPA9</name>
</gene>
<reference key="1">
    <citation type="journal article" date="2005" name="BMC Genomics">
        <title>Characterization of 954 bovine full-CDS cDNA sequences.</title>
        <authorList>
            <person name="Harhay G.P."/>
            <person name="Sonstegard T.S."/>
            <person name="Keele J.W."/>
            <person name="Heaton M.P."/>
            <person name="Clawson M.L."/>
            <person name="Snelling W.M."/>
            <person name="Wiedmann R.T."/>
            <person name="Van Tassell C.P."/>
            <person name="Smith T.P.L."/>
        </authorList>
    </citation>
    <scope>NUCLEOTIDE SEQUENCE [LARGE SCALE MRNA]</scope>
</reference>
<reference key="2">
    <citation type="submission" date="2005-08" db="EMBL/GenBank/DDBJ databases">
        <authorList>
            <consortium name="NIH - Mammalian Gene Collection (MGC) project"/>
        </authorList>
    </citation>
    <scope>NUCLEOTIDE SEQUENCE [LARGE SCALE MRNA]</scope>
    <source>
        <strain>Crossbred X Angus</strain>
        <tissue>Ileum</tissue>
    </source>
</reference>
<feature type="transit peptide" description="Mitochondrion" evidence="5">
    <location>
        <begin position="1"/>
        <end position="46"/>
    </location>
</feature>
<feature type="chain" id="PRO_0000289950" description="Stress-70 protein, mitochondrial">
    <location>
        <begin position="47"/>
        <end position="679"/>
    </location>
</feature>
<feature type="region of interest" description="Interaction with NFS1" evidence="5">
    <location>
        <begin position="1"/>
        <end position="432"/>
    </location>
</feature>
<feature type="region of interest" description="Nucleotide-binding domain (NBD)" evidence="5">
    <location>
        <begin position="63"/>
        <end position="431"/>
    </location>
</feature>
<feature type="region of interest" description="Interaction with FXN and ISCU" evidence="5">
    <location>
        <begin position="432"/>
        <end position="679"/>
    </location>
</feature>
<feature type="region of interest" description="Interdomain linker" evidence="5">
    <location>
        <begin position="432"/>
        <end position="441"/>
    </location>
</feature>
<feature type="region of interest" description="Substrate-binding domain (SBD)" evidence="5">
    <location>
        <begin position="442"/>
        <end position="679"/>
    </location>
</feature>
<feature type="region of interest" description="Disordered" evidence="8">
    <location>
        <begin position="656"/>
        <end position="679"/>
    </location>
</feature>
<feature type="compositionally biased region" description="Basic and acidic residues" evidence="8">
    <location>
        <begin position="669"/>
        <end position="679"/>
    </location>
</feature>
<feature type="binding site" evidence="5">
    <location>
        <position position="63"/>
    </location>
    <ligand>
        <name>ADP</name>
        <dbReference type="ChEBI" id="CHEBI:456216"/>
    </ligand>
</feature>
<feature type="binding site" evidence="5">
    <location>
        <position position="64"/>
    </location>
    <ligand>
        <name>ADP</name>
        <dbReference type="ChEBI" id="CHEBI:456216"/>
    </ligand>
</feature>
<feature type="binding site" evidence="5">
    <location>
        <position position="313"/>
    </location>
    <ligand>
        <name>ADP</name>
        <dbReference type="ChEBI" id="CHEBI:456216"/>
    </ligand>
</feature>
<feature type="binding site" evidence="5">
    <location>
        <position position="316"/>
    </location>
    <ligand>
        <name>ADP</name>
        <dbReference type="ChEBI" id="CHEBI:456216"/>
    </ligand>
</feature>
<feature type="binding site" evidence="5">
    <location>
        <position position="320"/>
    </location>
    <ligand>
        <name>ADP</name>
        <dbReference type="ChEBI" id="CHEBI:456216"/>
    </ligand>
</feature>
<feature type="binding site" evidence="5">
    <location>
        <position position="388"/>
    </location>
    <ligand>
        <name>ADP</name>
        <dbReference type="ChEBI" id="CHEBI:456216"/>
    </ligand>
</feature>
<feature type="binding site" evidence="5">
    <location>
        <position position="391"/>
    </location>
    <ligand>
        <name>ADP</name>
        <dbReference type="ChEBI" id="CHEBI:456216"/>
    </ligand>
</feature>
<feature type="modified residue" description="N6-acetyllysine" evidence="6">
    <location>
        <position position="76"/>
    </location>
</feature>
<feature type="modified residue" description="Phosphothreonine" evidence="5">
    <location>
        <position position="87"/>
    </location>
</feature>
<feature type="modified residue" description="N6-acetyllysine; alternate" evidence="5">
    <location>
        <position position="135"/>
    </location>
</feature>
<feature type="modified residue" description="N6-succinyllysine; alternate" evidence="6">
    <location>
        <position position="135"/>
    </location>
</feature>
<feature type="modified residue" description="N6-acetyllysine; alternate" evidence="5">
    <location>
        <position position="138"/>
    </location>
</feature>
<feature type="modified residue" description="N6-succinyllysine; alternate" evidence="6">
    <location>
        <position position="138"/>
    </location>
</feature>
<feature type="modified residue" description="N6-acetyllysine" evidence="5">
    <location>
        <position position="143"/>
    </location>
</feature>
<feature type="modified residue" description="N6-acetyllysine; alternate" evidence="6">
    <location>
        <position position="206"/>
    </location>
</feature>
<feature type="modified residue" description="N6-malonyllysine; alternate" evidence="1">
    <location>
        <position position="206"/>
    </location>
</feature>
<feature type="modified residue" description="N6-succinyllysine; alternate" evidence="6">
    <location>
        <position position="206"/>
    </location>
</feature>
<feature type="modified residue" description="N6-acetyllysine" evidence="5">
    <location>
        <position position="234"/>
    </location>
</feature>
<feature type="modified residue" description="N6-acetyllysine" evidence="5">
    <location>
        <position position="288"/>
    </location>
</feature>
<feature type="modified residue" description="N6-acetyllysine; alternate" evidence="5">
    <location>
        <position position="300"/>
    </location>
</feature>
<feature type="modified residue" description="N6-succinyllysine; alternate" evidence="6">
    <location>
        <position position="300"/>
    </location>
</feature>
<feature type="modified residue" description="N6-succinyllysine" evidence="6">
    <location>
        <position position="368"/>
    </location>
</feature>
<feature type="modified residue" description="N6-succinyllysine" evidence="6">
    <location>
        <position position="394"/>
    </location>
</feature>
<feature type="modified residue" description="Phosphoserine" evidence="5">
    <location>
        <position position="408"/>
    </location>
</feature>
<feature type="modified residue" description="Omega-N-methylarginine" evidence="5">
    <location>
        <position position="513"/>
    </location>
</feature>
<feature type="modified residue" description="N6-acetyllysine; alternate" evidence="5">
    <location>
        <position position="567"/>
    </location>
</feature>
<feature type="modified residue" description="N6-succinyllysine; alternate" evidence="6">
    <location>
        <position position="567"/>
    </location>
</feature>
<feature type="modified residue" description="N6-acetyllysine; alternate" evidence="6">
    <location>
        <position position="600"/>
    </location>
</feature>
<feature type="modified residue" description="N6-succinyllysine; alternate" evidence="6">
    <location>
        <position position="600"/>
    </location>
</feature>
<feature type="modified residue" description="N6-succinyllysine" evidence="6">
    <location>
        <position position="610"/>
    </location>
</feature>
<feature type="modified residue" description="N6-acetyllysine" evidence="6">
    <location>
        <position position="612"/>
    </location>
</feature>
<feature type="modified residue" description="N6-acetyllysine; alternate" evidence="5">
    <location>
        <position position="646"/>
    </location>
</feature>
<feature type="modified residue" description="N6-succinyllysine; alternate" evidence="6">
    <location>
        <position position="646"/>
    </location>
</feature>
<sequence length="679" mass="73742">MISASRAAVSRFVGTAASRGPTAARHQDGWNGLSHEAFRIVSRRDYASEAIKGAVVGIDLGTTNSCVAVMEGKQAKVLENAEGARTTPSVVAFTADGERLVGMPAKRQAVTNPNNTFYATKRLIGRRYDDPEVQKDIKNVPFKIVRASNGDAWVEAHGKLYSPSQIGAFVLMKMKETAENYLGHTAKNAVITVPAYFNDSQRQATKDAGQISGLNVLRVINEPTAAALAYGLDKSEDKIIAVYDLGGGTFDISILEIQKGVFEVKSTNGDTFLGGEDFDQALLRHIVKEFKRETGVDLTKDNMALQRVREAAEKAKCELSSSVQTDINLPYLTMDASGPKHLNMKLTRAQFEGIVTDLIRRTIAPCQKAMQDAEVSKSDIGEVILVGGMTRMPKVQQTVQDLFGRAPSKAVNPDEAVAIGAAIQGGVLAGDVTDVLLLDVTPLSLGIETLGGVFTKLINRNTTIPTKKSQVFSTAADGQTQVEIKVCQGEREMAGDNKLLGQFTLIGIPPAPRGVPQIEVTFDIDANGIVHVSAKDKGTGREQQIVIQSSGGLSKDDIENMVKNAEKYAEEDRRKKERVEAVNMAEGIIHDTETKMEEFKDQLPADECNKLKEEISKMRELLARKDSETGENIRQAASSLQQASLKLFEMAYKKMASEREGSGSSGTGEQKDNQKEEKQ</sequence>
<name>HSPA9_BOVIN</name>
<comment type="function">
    <text evidence="2 5 6">Mitochondrial chaperone that plays a key role in mitochondrial protein import, folding, and assembly. Plays an essential role in the protein quality control system, the correct folding of proteins, the re-folding of misfolded proteins, and the targeting of proteins for subsequent degradation. These processes are achieved through cycles of ATP binding, ATP hydrolysis, and ADP release, mediated by co-chaperones. In mitochondria, it associates with the TIM (translocase of the inner membrane) protein complex to assist in the import and folding of mitochondrial proteins (By similarity). Plays an important role in mitochondrial iron-sulfur cluster (ISC) biogenesis, interacts with and stabilizes ISC cluster assembly proteins FXN, NFU1, NFS1 and ISCU. Regulates erythropoiesis via stabilization of ISC assembly. Regulates mitochondrial calcium-dependent apoptosis by coupling two calcium channels, ITPR1 and VDAC1, at the mitochondria-associated endoplasmic reticulum (ER) membrane to facilitate calcium transport from the ER lumen to the mitochondria intermembrane space, providing calcium for the downstream calcium channel MCU, which releases it into the mitochondrial matrix (By similarity). Although primarily located in the mitochondria, it is also found in other cellular compartments. In the cytosol, it associates with proteins involved in signaling, apoptosis, or senescence. It may play a role in cell cycle regulation via its interaction with and promotion of degradation of TP53 (By similarity). May play a role in the control of cell proliferation and cellular aging (By similarity). Protects against reactive oxygen species (ROS) (By similarity). Extracellular HSPA9 plays a cytoprotective role by preventing cell lysis following immune attack by the membrane attack complex by disrupting formation of the complex (By similarity).</text>
</comment>
<comment type="catalytic activity">
    <reaction evidence="5">
        <text>ATP + H2O = ADP + phosphate + H(+)</text>
        <dbReference type="Rhea" id="RHEA:13065"/>
        <dbReference type="ChEBI" id="CHEBI:15377"/>
        <dbReference type="ChEBI" id="CHEBI:15378"/>
        <dbReference type="ChEBI" id="CHEBI:30616"/>
        <dbReference type="ChEBI" id="CHEBI:43474"/>
        <dbReference type="ChEBI" id="CHEBI:456216"/>
        <dbReference type="EC" id="3.6.4.10"/>
    </reaction>
    <physiologicalReaction direction="left-to-right" evidence="5">
        <dbReference type="Rhea" id="RHEA:13066"/>
    </physiologicalReaction>
</comment>
<comment type="activity regulation">
    <text evidence="4 5">The chaperone activity is regulated by ATP-induced allosteric coupling of the nucleotide-binding (NBD) and substrate-binding (SBD) domains. ATP binding in the NBD leads to a conformational change in the NBD, which is transferred through the interdomain linker (IDL) to the substrate-binding domain (SBD). This elicits a reduced substrate affinity and a faster substrate exchange rate. Upon hydrolysis of ATP to ADP, the protein undergoes a conformational change that increases its affinity for substrate proteins. It cycles through repeated phases of ATP hydrolysis and nucleotide exchange, facilitating repeated cycles of substrate binding and release (By similarity). Functions in collaboration with co-chaperones. Functions with the co-chaperone, DNLZ, to maintain solubility and regulate ATP hydrolysis. Nucleotide exchange factors, GRPEL1 and GRPEL2, accelerate nucleotide exchange (By similarity).</text>
</comment>
<comment type="subunit">
    <text evidence="5 7">Interacts strongly with the intermediate form of FXN and weakly with its mature form. Interacts with HSCB. Associates with the mitochondrial contact site and cristae organizing system (MICOS) complex, composed of at least MICOS10/MIC10, CHCHD3/MIC19, CHCHD6/MIC25, APOOL/MIC27, IMMT/MIC60, APOO/MIC23/MIC26 and QIL1/MIC13. This complex was also known under the names MINOS or MitOS complex. The MICOS complex associates with mitochondrial outer membrane proteins SAMM50, MTX1, MTX2 and DNAJC11, mitochondrial inner membrane protein TMEM11 and with HSPA9. Interacts with DNLZ, the interaction is required to prevent self-aggregation. Interacts with TESPA1. Interacts with PDPN. Interacts with NFU1, NFS1 and ISCU. Interacts with TP53; the interaction promotes TP53 degradation (By similarity). Interacts (via SBD domain) with UBXN2A; the interaction with UBXN2A inhibits HSPA9/MOT-2 interaction with and degradation of TP53, thereby promotes TP53 translocation to the nucleus (By similarity). Interacts with ITPR1 AND VDAC1; this interaction couples ITPR1 to VDAC1 (By similarity). Component of the TIM23 mitochondrial inner membrane pre-sequence translocase complex (By similarity).</text>
</comment>
<comment type="subcellular location">
    <subcellularLocation>
        <location evidence="5">Mitochondrion</location>
    </subcellularLocation>
    <subcellularLocation>
        <location evidence="5">Nucleus</location>
        <location evidence="5">Nucleolus</location>
    </subcellularLocation>
    <subcellularLocation>
        <location evidence="5">Cytoplasm</location>
    </subcellularLocation>
    <subcellularLocation>
        <location evidence="7">Mitochondrion matrix</location>
    </subcellularLocation>
    <text evidence="7">Found in a complex with HSPA9 and VDAC1 at the endoplasmic reticulum-mitochondria contact sites.</text>
</comment>
<comment type="domain">
    <text evidence="3">The N-terminal nucleotide binding domain (NBD) is responsible for binding and hydrolyzing ATP. The C-terminal substrate-binding domain (SBD) binds to the client/substrate proteins. The two domains are allosterically coupled so that, when ATP is bound to the NBD, the SBD binds relatively weakly to clients. When ADP is bound in the NBD, a conformational change enhances the affinity of the SBD for client proteins.</text>
</comment>
<comment type="similarity">
    <text evidence="9">Belongs to the heat shock protein 70 family.</text>
</comment>
<proteinExistence type="evidence at transcript level"/>